<sequence length="64" mass="7454">MLPHTSDTTSTFRLKTVFDLVFENRNIIYKADVVNDIIHHRLKVSLPMIKSLFYKMSLPTTITT</sequence>
<gene>
    <name type="ordered locus">VACWR006</name>
</gene>
<gene>
    <name type="ordered locus">VACWR213</name>
</gene>
<feature type="chain" id="PRO_0000412620" description="Uncharacterized protein VACWR006">
    <location>
        <begin position="1"/>
        <end position="64"/>
    </location>
</feature>
<proteinExistence type="inferred from homology"/>
<name>VA006_VACCW</name>
<organism>
    <name type="scientific">Vaccinia virus (strain Western Reserve)</name>
    <name type="common">VACV</name>
    <name type="synonym">Vaccinia virus (strain WR)</name>
    <dbReference type="NCBI Taxonomy" id="10254"/>
    <lineage>
        <taxon>Viruses</taxon>
        <taxon>Varidnaviria</taxon>
        <taxon>Bamfordvirae</taxon>
        <taxon>Nucleocytoviricota</taxon>
        <taxon>Pokkesviricetes</taxon>
        <taxon>Chitovirales</taxon>
        <taxon>Poxviridae</taxon>
        <taxon>Chordopoxvirinae</taxon>
        <taxon>Orthopoxvirus</taxon>
        <taxon>Vaccinia virus</taxon>
    </lineage>
</organism>
<protein>
    <recommendedName>
        <fullName>Uncharacterized protein VACWR006</fullName>
    </recommendedName>
</protein>
<organismHost>
    <name type="scientific">Bos taurus</name>
    <name type="common">Bovine</name>
    <dbReference type="NCBI Taxonomy" id="9913"/>
</organismHost>
<reference key="1">
    <citation type="submission" date="2003-02" db="EMBL/GenBank/DDBJ databases">
        <title>Sequencing of the coding region of Vaccinia-WR to an average 9-fold redundancy and an error rate of 0.16/10kb.</title>
        <authorList>
            <person name="Esposito J.J."/>
            <person name="Frace A.M."/>
            <person name="Sammons S.A."/>
            <person name="Olsen-Rasmussen M."/>
            <person name="Osborne J."/>
            <person name="Wohlhueter R."/>
        </authorList>
    </citation>
    <scope>NUCLEOTIDE SEQUENCE [LARGE SCALE GENOMIC DNA]</scope>
</reference>
<accession>Q805H2</accession>
<evidence type="ECO:0000305" key="1"/>
<dbReference type="EMBL" id="AY243312">
    <property type="protein sequence ID" value="AAO89285.1"/>
    <property type="molecule type" value="Genomic_DNA"/>
</dbReference>
<dbReference type="EMBL" id="AY243312">
    <property type="protein sequence ID" value="AAO89492.1"/>
    <property type="molecule type" value="Genomic_DNA"/>
</dbReference>
<dbReference type="RefSeq" id="YP_232888.1">
    <property type="nucleotide sequence ID" value="NC_006998.1"/>
</dbReference>
<dbReference type="RefSeq" id="YP_233095.1">
    <property type="nucleotide sequence ID" value="NC_006998.1"/>
</dbReference>
<dbReference type="DNASU" id="3707621"/>
<dbReference type="GeneID" id="3707590"/>
<dbReference type="GeneID" id="3707621"/>
<dbReference type="KEGG" id="vg:3707590"/>
<dbReference type="KEGG" id="vg:3707621"/>
<dbReference type="Proteomes" id="UP000000344">
    <property type="component" value="Genome"/>
</dbReference>
<keyword id="KW-1185">Reference proteome</keyword>
<comment type="similarity">
    <text evidence="1">Belongs to the orthopoxviruses VACWR006 protein family.</text>
</comment>